<name>DXR_PROM1</name>
<dbReference type="EC" id="1.1.1.267" evidence="1"/>
<dbReference type="EMBL" id="CP000553">
    <property type="protein sequence ID" value="ABM76148.1"/>
    <property type="molecule type" value="Genomic_DNA"/>
</dbReference>
<dbReference type="RefSeq" id="WP_011824160.1">
    <property type="nucleotide sequence ID" value="NC_008819.1"/>
</dbReference>
<dbReference type="SMR" id="A2C3T8"/>
<dbReference type="KEGG" id="pme:NATL1_15911"/>
<dbReference type="eggNOG" id="COG0743">
    <property type="taxonomic scope" value="Bacteria"/>
</dbReference>
<dbReference type="HOGENOM" id="CLU_035714_4_0_3"/>
<dbReference type="UniPathway" id="UPA00056">
    <property type="reaction ID" value="UER00092"/>
</dbReference>
<dbReference type="Proteomes" id="UP000002592">
    <property type="component" value="Chromosome"/>
</dbReference>
<dbReference type="GO" id="GO:0030604">
    <property type="term" value="F:1-deoxy-D-xylulose-5-phosphate reductoisomerase activity"/>
    <property type="evidence" value="ECO:0007669"/>
    <property type="project" value="UniProtKB-UniRule"/>
</dbReference>
<dbReference type="GO" id="GO:0030145">
    <property type="term" value="F:manganese ion binding"/>
    <property type="evidence" value="ECO:0007669"/>
    <property type="project" value="TreeGrafter"/>
</dbReference>
<dbReference type="GO" id="GO:0070402">
    <property type="term" value="F:NADPH binding"/>
    <property type="evidence" value="ECO:0007669"/>
    <property type="project" value="InterPro"/>
</dbReference>
<dbReference type="GO" id="GO:0051484">
    <property type="term" value="P:isopentenyl diphosphate biosynthetic process, methylerythritol 4-phosphate pathway involved in terpenoid biosynthetic process"/>
    <property type="evidence" value="ECO:0007669"/>
    <property type="project" value="TreeGrafter"/>
</dbReference>
<dbReference type="FunFam" id="3.40.50.720:FF:000045">
    <property type="entry name" value="1-deoxy-D-xylulose 5-phosphate reductoisomerase"/>
    <property type="match status" value="1"/>
</dbReference>
<dbReference type="Gene3D" id="1.10.1740.10">
    <property type="match status" value="1"/>
</dbReference>
<dbReference type="Gene3D" id="3.40.50.720">
    <property type="entry name" value="NAD(P)-binding Rossmann-like Domain"/>
    <property type="match status" value="1"/>
</dbReference>
<dbReference type="HAMAP" id="MF_00183">
    <property type="entry name" value="DXP_reductoisom"/>
    <property type="match status" value="1"/>
</dbReference>
<dbReference type="InterPro" id="IPR003821">
    <property type="entry name" value="DXP_reductoisomerase"/>
</dbReference>
<dbReference type="InterPro" id="IPR013644">
    <property type="entry name" value="DXP_reductoisomerase_C"/>
</dbReference>
<dbReference type="InterPro" id="IPR013512">
    <property type="entry name" value="DXP_reductoisomerase_N"/>
</dbReference>
<dbReference type="InterPro" id="IPR026877">
    <property type="entry name" value="DXPR_C"/>
</dbReference>
<dbReference type="InterPro" id="IPR036169">
    <property type="entry name" value="DXPR_C_sf"/>
</dbReference>
<dbReference type="InterPro" id="IPR036291">
    <property type="entry name" value="NAD(P)-bd_dom_sf"/>
</dbReference>
<dbReference type="NCBIfam" id="TIGR00243">
    <property type="entry name" value="Dxr"/>
    <property type="match status" value="1"/>
</dbReference>
<dbReference type="NCBIfam" id="NF009114">
    <property type="entry name" value="PRK12464.1"/>
    <property type="match status" value="1"/>
</dbReference>
<dbReference type="PANTHER" id="PTHR30525">
    <property type="entry name" value="1-DEOXY-D-XYLULOSE 5-PHOSPHATE REDUCTOISOMERASE"/>
    <property type="match status" value="1"/>
</dbReference>
<dbReference type="PANTHER" id="PTHR30525:SF0">
    <property type="entry name" value="1-DEOXY-D-XYLULOSE 5-PHOSPHATE REDUCTOISOMERASE, CHLOROPLASTIC"/>
    <property type="match status" value="1"/>
</dbReference>
<dbReference type="Pfam" id="PF08436">
    <property type="entry name" value="DXP_redisom_C"/>
    <property type="match status" value="1"/>
</dbReference>
<dbReference type="Pfam" id="PF02670">
    <property type="entry name" value="DXP_reductoisom"/>
    <property type="match status" value="1"/>
</dbReference>
<dbReference type="Pfam" id="PF13288">
    <property type="entry name" value="DXPR_C"/>
    <property type="match status" value="1"/>
</dbReference>
<dbReference type="PIRSF" id="PIRSF006205">
    <property type="entry name" value="Dxp_reductismrs"/>
    <property type="match status" value="1"/>
</dbReference>
<dbReference type="SUPFAM" id="SSF69055">
    <property type="entry name" value="1-deoxy-D-xylulose-5-phosphate reductoisomerase, C-terminal domain"/>
    <property type="match status" value="1"/>
</dbReference>
<dbReference type="SUPFAM" id="SSF55347">
    <property type="entry name" value="Glyceraldehyde-3-phosphate dehydrogenase-like, C-terminal domain"/>
    <property type="match status" value="1"/>
</dbReference>
<dbReference type="SUPFAM" id="SSF51735">
    <property type="entry name" value="NAD(P)-binding Rossmann-fold domains"/>
    <property type="match status" value="1"/>
</dbReference>
<protein>
    <recommendedName>
        <fullName evidence="1">1-deoxy-D-xylulose 5-phosphate reductoisomerase</fullName>
        <shortName evidence="1">DXP reductoisomerase</shortName>
        <ecNumber evidence="1">1.1.1.267</ecNumber>
    </recommendedName>
    <alternativeName>
        <fullName evidence="1">1-deoxyxylulose-5-phosphate reductoisomerase</fullName>
    </alternativeName>
    <alternativeName>
        <fullName evidence="1">2-C-methyl-D-erythritol 4-phosphate synthase</fullName>
    </alternativeName>
</protein>
<organism>
    <name type="scientific">Prochlorococcus marinus (strain NATL1A)</name>
    <dbReference type="NCBI Taxonomy" id="167555"/>
    <lineage>
        <taxon>Bacteria</taxon>
        <taxon>Bacillati</taxon>
        <taxon>Cyanobacteriota</taxon>
        <taxon>Cyanophyceae</taxon>
        <taxon>Synechococcales</taxon>
        <taxon>Prochlorococcaceae</taxon>
        <taxon>Prochlorococcus</taxon>
    </lineage>
</organism>
<gene>
    <name evidence="1" type="primary">dxr</name>
    <name type="ordered locus">NATL1_15911</name>
</gene>
<accession>A2C3T8</accession>
<reference key="1">
    <citation type="journal article" date="2007" name="PLoS Genet.">
        <title>Patterns and implications of gene gain and loss in the evolution of Prochlorococcus.</title>
        <authorList>
            <person name="Kettler G.C."/>
            <person name="Martiny A.C."/>
            <person name="Huang K."/>
            <person name="Zucker J."/>
            <person name="Coleman M.L."/>
            <person name="Rodrigue S."/>
            <person name="Chen F."/>
            <person name="Lapidus A."/>
            <person name="Ferriera S."/>
            <person name="Johnson J."/>
            <person name="Steglich C."/>
            <person name="Church G.M."/>
            <person name="Richardson P."/>
            <person name="Chisholm S.W."/>
        </authorList>
    </citation>
    <scope>NUCLEOTIDE SEQUENCE [LARGE SCALE GENOMIC DNA]</scope>
    <source>
        <strain>NATL1A</strain>
    </source>
</reference>
<keyword id="KW-0414">Isoprene biosynthesis</keyword>
<keyword id="KW-0464">Manganese</keyword>
<keyword id="KW-0479">Metal-binding</keyword>
<keyword id="KW-0521">NADP</keyword>
<keyword id="KW-0560">Oxidoreductase</keyword>
<feature type="chain" id="PRO_1000077338" description="1-deoxy-D-xylulose 5-phosphate reductoisomerase">
    <location>
        <begin position="1"/>
        <end position="412"/>
    </location>
</feature>
<feature type="binding site" evidence="1">
    <location>
        <position position="10"/>
    </location>
    <ligand>
        <name>NADPH</name>
        <dbReference type="ChEBI" id="CHEBI:57783"/>
    </ligand>
</feature>
<feature type="binding site" evidence="1">
    <location>
        <position position="11"/>
    </location>
    <ligand>
        <name>NADPH</name>
        <dbReference type="ChEBI" id="CHEBI:57783"/>
    </ligand>
</feature>
<feature type="binding site" evidence="1">
    <location>
        <position position="12"/>
    </location>
    <ligand>
        <name>NADPH</name>
        <dbReference type="ChEBI" id="CHEBI:57783"/>
    </ligand>
</feature>
<feature type="binding site" evidence="1">
    <location>
        <position position="13"/>
    </location>
    <ligand>
        <name>NADPH</name>
        <dbReference type="ChEBI" id="CHEBI:57783"/>
    </ligand>
</feature>
<feature type="binding site" evidence="1">
    <location>
        <position position="36"/>
    </location>
    <ligand>
        <name>NADPH</name>
        <dbReference type="ChEBI" id="CHEBI:57783"/>
    </ligand>
</feature>
<feature type="binding site" evidence="1">
    <location>
        <position position="37"/>
    </location>
    <ligand>
        <name>NADPH</name>
        <dbReference type="ChEBI" id="CHEBI:57783"/>
    </ligand>
</feature>
<feature type="binding site" evidence="1">
    <location>
        <position position="38"/>
    </location>
    <ligand>
        <name>NADPH</name>
        <dbReference type="ChEBI" id="CHEBI:57783"/>
    </ligand>
</feature>
<feature type="binding site" evidence="1">
    <location>
        <position position="130"/>
    </location>
    <ligand>
        <name>NADPH</name>
        <dbReference type="ChEBI" id="CHEBI:57783"/>
    </ligand>
</feature>
<feature type="binding site" evidence="1">
    <location>
        <position position="131"/>
    </location>
    <ligand>
        <name>1-deoxy-D-xylulose 5-phosphate</name>
        <dbReference type="ChEBI" id="CHEBI:57792"/>
    </ligand>
</feature>
<feature type="binding site" evidence="1">
    <location>
        <position position="132"/>
    </location>
    <ligand>
        <name>NADPH</name>
        <dbReference type="ChEBI" id="CHEBI:57783"/>
    </ligand>
</feature>
<feature type="binding site" evidence="1">
    <location>
        <position position="156"/>
    </location>
    <ligand>
        <name>Mn(2+)</name>
        <dbReference type="ChEBI" id="CHEBI:29035"/>
    </ligand>
</feature>
<feature type="binding site" evidence="1">
    <location>
        <position position="157"/>
    </location>
    <ligand>
        <name>1-deoxy-D-xylulose 5-phosphate</name>
        <dbReference type="ChEBI" id="CHEBI:57792"/>
    </ligand>
</feature>
<feature type="binding site" evidence="1">
    <location>
        <position position="158"/>
    </location>
    <ligand>
        <name>1-deoxy-D-xylulose 5-phosphate</name>
        <dbReference type="ChEBI" id="CHEBI:57792"/>
    </ligand>
</feature>
<feature type="binding site" evidence="1">
    <location>
        <position position="158"/>
    </location>
    <ligand>
        <name>Mn(2+)</name>
        <dbReference type="ChEBI" id="CHEBI:29035"/>
    </ligand>
</feature>
<feature type="binding site" evidence="1">
    <location>
        <position position="194"/>
    </location>
    <ligand>
        <name>1-deoxy-D-xylulose 5-phosphate</name>
        <dbReference type="ChEBI" id="CHEBI:57792"/>
    </ligand>
</feature>
<feature type="binding site" evidence="1">
    <location>
        <position position="217"/>
    </location>
    <ligand>
        <name>1-deoxy-D-xylulose 5-phosphate</name>
        <dbReference type="ChEBI" id="CHEBI:57792"/>
    </ligand>
</feature>
<feature type="binding site" evidence="1">
    <location>
        <position position="223"/>
    </location>
    <ligand>
        <name>NADPH</name>
        <dbReference type="ChEBI" id="CHEBI:57783"/>
    </ligand>
</feature>
<feature type="binding site" evidence="1">
    <location>
        <position position="230"/>
    </location>
    <ligand>
        <name>1-deoxy-D-xylulose 5-phosphate</name>
        <dbReference type="ChEBI" id="CHEBI:57792"/>
    </ligand>
</feature>
<feature type="binding site" evidence="1">
    <location>
        <position position="235"/>
    </location>
    <ligand>
        <name>1-deoxy-D-xylulose 5-phosphate</name>
        <dbReference type="ChEBI" id="CHEBI:57792"/>
    </ligand>
</feature>
<feature type="binding site" evidence="1">
    <location>
        <position position="236"/>
    </location>
    <ligand>
        <name>1-deoxy-D-xylulose 5-phosphate</name>
        <dbReference type="ChEBI" id="CHEBI:57792"/>
    </ligand>
</feature>
<feature type="binding site" evidence="1">
    <location>
        <position position="239"/>
    </location>
    <ligand>
        <name>1-deoxy-D-xylulose 5-phosphate</name>
        <dbReference type="ChEBI" id="CHEBI:57792"/>
    </ligand>
</feature>
<feature type="binding site" evidence="1">
    <location>
        <position position="239"/>
    </location>
    <ligand>
        <name>Mn(2+)</name>
        <dbReference type="ChEBI" id="CHEBI:29035"/>
    </ligand>
</feature>
<sequence>MKAISVLGSTGSIGTQTLQIAEEFPDQFKIVALTAGKNLDLVTKQIETHQPEVVSLADESLLPELTRRINSLNEDSKILKKPLLMAGAEGLNTAAAWGSADLVVTGIVGCAGLLPTLAAIEAGKDLALANKETLIAAGPVVIPALKKSGSRLLPADSEHSAIFQCLQGTPWADNARLSTGVPTPGFKSIQLTASGGAFRDWKAEDLVKATVEDATSHPNWSMGKKITVDSATLMNKGLEVIEAHYLFGLSYDQIEIIIHPQSIIHSMVELDDSSVLAQLGWPDMKLPILYCLSWPSRLKTPWPRLKLTQIGNLTFKEPDTNKYPCMELAYSAGKSGGTMPAVLNAANEKAVELFLEERFKFIDIPKVIEAICEKHKCDLNLNPSLSEILEIDNWAREEVLDYSEKNIKKMQF</sequence>
<proteinExistence type="inferred from homology"/>
<evidence type="ECO:0000255" key="1">
    <source>
        <dbReference type="HAMAP-Rule" id="MF_00183"/>
    </source>
</evidence>
<comment type="function">
    <text evidence="1">Catalyzes the NADPH-dependent rearrangement and reduction of 1-deoxy-D-xylulose-5-phosphate (DXP) to 2-C-methyl-D-erythritol 4-phosphate (MEP).</text>
</comment>
<comment type="catalytic activity">
    <reaction evidence="1">
        <text>2-C-methyl-D-erythritol 4-phosphate + NADP(+) = 1-deoxy-D-xylulose 5-phosphate + NADPH + H(+)</text>
        <dbReference type="Rhea" id="RHEA:13717"/>
        <dbReference type="ChEBI" id="CHEBI:15378"/>
        <dbReference type="ChEBI" id="CHEBI:57783"/>
        <dbReference type="ChEBI" id="CHEBI:57792"/>
        <dbReference type="ChEBI" id="CHEBI:58262"/>
        <dbReference type="ChEBI" id="CHEBI:58349"/>
        <dbReference type="EC" id="1.1.1.267"/>
    </reaction>
    <physiologicalReaction direction="right-to-left" evidence="1">
        <dbReference type="Rhea" id="RHEA:13719"/>
    </physiologicalReaction>
</comment>
<comment type="cofactor">
    <cofactor evidence="1">
        <name>Mg(2+)</name>
        <dbReference type="ChEBI" id="CHEBI:18420"/>
    </cofactor>
    <cofactor evidence="1">
        <name>Mn(2+)</name>
        <dbReference type="ChEBI" id="CHEBI:29035"/>
    </cofactor>
</comment>
<comment type="pathway">
    <text evidence="1">Isoprenoid biosynthesis; isopentenyl diphosphate biosynthesis via DXP pathway; isopentenyl diphosphate from 1-deoxy-D-xylulose 5-phosphate: step 1/6.</text>
</comment>
<comment type="similarity">
    <text evidence="1">Belongs to the DXR family.</text>
</comment>